<evidence type="ECO:0000255" key="1">
    <source>
        <dbReference type="HAMAP-Rule" id="MF_00195"/>
    </source>
</evidence>
<organism>
    <name type="scientific">Streptococcus pyogenes serotype M2 (strain MGAS10270)</name>
    <dbReference type="NCBI Taxonomy" id="370552"/>
    <lineage>
        <taxon>Bacteria</taxon>
        <taxon>Bacillati</taxon>
        <taxon>Bacillota</taxon>
        <taxon>Bacilli</taxon>
        <taxon>Lactobacillales</taxon>
        <taxon>Streptococcaceae</taxon>
        <taxon>Streptococcus</taxon>
    </lineage>
</organism>
<proteinExistence type="inferred from homology"/>
<reference key="1">
    <citation type="journal article" date="2006" name="Proc. Natl. Acad. Sci. U.S.A.">
        <title>Molecular genetic anatomy of inter- and intraserotype variation in the human bacterial pathogen group A Streptococcus.</title>
        <authorList>
            <person name="Beres S.B."/>
            <person name="Richter E.W."/>
            <person name="Nagiec M.J."/>
            <person name="Sumby P."/>
            <person name="Porcella S.F."/>
            <person name="DeLeo F.R."/>
            <person name="Musser J.M."/>
        </authorList>
    </citation>
    <scope>NUCLEOTIDE SEQUENCE [LARGE SCALE GENOMIC DNA]</scope>
    <source>
        <strain>MGAS10270</strain>
    </source>
</reference>
<feature type="chain" id="PRO_1000011755" description="GTPase Der">
    <location>
        <begin position="1"/>
        <end position="436"/>
    </location>
</feature>
<feature type="domain" description="EngA-type G 1">
    <location>
        <begin position="4"/>
        <end position="167"/>
    </location>
</feature>
<feature type="domain" description="EngA-type G 2">
    <location>
        <begin position="175"/>
        <end position="351"/>
    </location>
</feature>
<feature type="domain" description="KH-like" evidence="1">
    <location>
        <begin position="352"/>
        <end position="436"/>
    </location>
</feature>
<feature type="binding site" evidence="1">
    <location>
        <begin position="10"/>
        <end position="17"/>
    </location>
    <ligand>
        <name>GTP</name>
        <dbReference type="ChEBI" id="CHEBI:37565"/>
        <label>1</label>
    </ligand>
</feature>
<feature type="binding site" evidence="1">
    <location>
        <begin position="57"/>
        <end position="61"/>
    </location>
    <ligand>
        <name>GTP</name>
        <dbReference type="ChEBI" id="CHEBI:37565"/>
        <label>1</label>
    </ligand>
</feature>
<feature type="binding site" evidence="1">
    <location>
        <begin position="119"/>
        <end position="122"/>
    </location>
    <ligand>
        <name>GTP</name>
        <dbReference type="ChEBI" id="CHEBI:37565"/>
        <label>1</label>
    </ligand>
</feature>
<feature type="binding site" evidence="1">
    <location>
        <begin position="181"/>
        <end position="188"/>
    </location>
    <ligand>
        <name>GTP</name>
        <dbReference type="ChEBI" id="CHEBI:37565"/>
        <label>2</label>
    </ligand>
</feature>
<feature type="binding site" evidence="1">
    <location>
        <begin position="229"/>
        <end position="233"/>
    </location>
    <ligand>
        <name>GTP</name>
        <dbReference type="ChEBI" id="CHEBI:37565"/>
        <label>2</label>
    </ligand>
</feature>
<feature type="binding site" evidence="1">
    <location>
        <begin position="294"/>
        <end position="297"/>
    </location>
    <ligand>
        <name>GTP</name>
        <dbReference type="ChEBI" id="CHEBI:37565"/>
        <label>2</label>
    </ligand>
</feature>
<keyword id="KW-0342">GTP-binding</keyword>
<keyword id="KW-0547">Nucleotide-binding</keyword>
<keyword id="KW-0677">Repeat</keyword>
<keyword id="KW-0690">Ribosome biogenesis</keyword>
<accession>Q1JIH4</accession>
<name>DER_STRPD</name>
<gene>
    <name evidence="1" type="primary">der</name>
    <name type="synonym">engA</name>
    <name type="ordered locus">MGAS10270_Spy0284</name>
</gene>
<comment type="function">
    <text evidence="1">GTPase that plays an essential role in the late steps of ribosome biogenesis.</text>
</comment>
<comment type="subunit">
    <text evidence="1">Associates with the 50S ribosomal subunit.</text>
</comment>
<comment type="similarity">
    <text evidence="1">Belongs to the TRAFAC class TrmE-Era-EngA-EngB-Septin-like GTPase superfamily. EngA (Der) GTPase family.</text>
</comment>
<protein>
    <recommendedName>
        <fullName evidence="1">GTPase Der</fullName>
    </recommendedName>
    <alternativeName>
        <fullName evidence="1">GTP-binding protein EngA</fullName>
    </alternativeName>
</protein>
<dbReference type="EMBL" id="CP000260">
    <property type="protein sequence ID" value="ABF33349.1"/>
    <property type="molecule type" value="Genomic_DNA"/>
</dbReference>
<dbReference type="SMR" id="Q1JIH4"/>
<dbReference type="KEGG" id="sph:MGAS10270_Spy0284"/>
<dbReference type="HOGENOM" id="CLU_016077_6_2_9"/>
<dbReference type="Proteomes" id="UP000002436">
    <property type="component" value="Chromosome"/>
</dbReference>
<dbReference type="GO" id="GO:0005525">
    <property type="term" value="F:GTP binding"/>
    <property type="evidence" value="ECO:0007669"/>
    <property type="project" value="UniProtKB-UniRule"/>
</dbReference>
<dbReference type="GO" id="GO:0043022">
    <property type="term" value="F:ribosome binding"/>
    <property type="evidence" value="ECO:0007669"/>
    <property type="project" value="TreeGrafter"/>
</dbReference>
<dbReference type="GO" id="GO:0042254">
    <property type="term" value="P:ribosome biogenesis"/>
    <property type="evidence" value="ECO:0007669"/>
    <property type="project" value="UniProtKB-KW"/>
</dbReference>
<dbReference type="CDD" id="cd01894">
    <property type="entry name" value="EngA1"/>
    <property type="match status" value="1"/>
</dbReference>
<dbReference type="CDD" id="cd01895">
    <property type="entry name" value="EngA2"/>
    <property type="match status" value="1"/>
</dbReference>
<dbReference type="FunFam" id="3.30.300.20:FF:000004">
    <property type="entry name" value="GTPase Der"/>
    <property type="match status" value="1"/>
</dbReference>
<dbReference type="FunFam" id="3.40.50.300:FF:000040">
    <property type="entry name" value="GTPase Der"/>
    <property type="match status" value="1"/>
</dbReference>
<dbReference type="FunFam" id="3.40.50.300:FF:000057">
    <property type="entry name" value="GTPase Der"/>
    <property type="match status" value="1"/>
</dbReference>
<dbReference type="Gene3D" id="3.30.300.20">
    <property type="match status" value="1"/>
</dbReference>
<dbReference type="Gene3D" id="3.40.50.300">
    <property type="entry name" value="P-loop containing nucleotide triphosphate hydrolases"/>
    <property type="match status" value="2"/>
</dbReference>
<dbReference type="HAMAP" id="MF_00195">
    <property type="entry name" value="GTPase_Der"/>
    <property type="match status" value="1"/>
</dbReference>
<dbReference type="InterPro" id="IPR031166">
    <property type="entry name" value="G_ENGA"/>
</dbReference>
<dbReference type="InterPro" id="IPR006073">
    <property type="entry name" value="GTP-bd"/>
</dbReference>
<dbReference type="InterPro" id="IPR016484">
    <property type="entry name" value="GTPase_Der"/>
</dbReference>
<dbReference type="InterPro" id="IPR032859">
    <property type="entry name" value="KH_dom-like"/>
</dbReference>
<dbReference type="InterPro" id="IPR015946">
    <property type="entry name" value="KH_dom-like_a/b"/>
</dbReference>
<dbReference type="InterPro" id="IPR027417">
    <property type="entry name" value="P-loop_NTPase"/>
</dbReference>
<dbReference type="InterPro" id="IPR005225">
    <property type="entry name" value="Small_GTP-bd"/>
</dbReference>
<dbReference type="NCBIfam" id="TIGR03594">
    <property type="entry name" value="GTPase_EngA"/>
    <property type="match status" value="1"/>
</dbReference>
<dbReference type="NCBIfam" id="TIGR00231">
    <property type="entry name" value="small_GTP"/>
    <property type="match status" value="2"/>
</dbReference>
<dbReference type="PANTHER" id="PTHR43834">
    <property type="entry name" value="GTPASE DER"/>
    <property type="match status" value="1"/>
</dbReference>
<dbReference type="PANTHER" id="PTHR43834:SF6">
    <property type="entry name" value="GTPASE DER"/>
    <property type="match status" value="1"/>
</dbReference>
<dbReference type="Pfam" id="PF14714">
    <property type="entry name" value="KH_dom-like"/>
    <property type="match status" value="1"/>
</dbReference>
<dbReference type="Pfam" id="PF01926">
    <property type="entry name" value="MMR_HSR1"/>
    <property type="match status" value="2"/>
</dbReference>
<dbReference type="PIRSF" id="PIRSF006485">
    <property type="entry name" value="GTP-binding_EngA"/>
    <property type="match status" value="1"/>
</dbReference>
<dbReference type="PRINTS" id="PR00326">
    <property type="entry name" value="GTP1OBG"/>
</dbReference>
<dbReference type="SUPFAM" id="SSF52540">
    <property type="entry name" value="P-loop containing nucleoside triphosphate hydrolases"/>
    <property type="match status" value="2"/>
</dbReference>
<dbReference type="PROSITE" id="PS51712">
    <property type="entry name" value="G_ENGA"/>
    <property type="match status" value="2"/>
</dbReference>
<sequence length="436" mass="48802">MVLPTVAIVGRPNVGKSTLFNRIAGERISIVEDVEGVTRDRIYATGEWLNRQFSLIDTGGIDDVDAPFMEQIKHQAQIAMEEADVIVFVVSGKEGVTDADEYVSKILYRTNTPVILAVNKVDNPEMRNDIYDFYSLGLGDPYPVSSVHGIGTGDVLDAIVENLPVEEAEENDDIIRFSLIGRPNVGKSSLINAILGEDRVIASPVAGTTRDAIDTHFTDADGQEFTMIDTAGMRKSGKIYENTEKYSVMRAMRAIDRSDVVLMVINAEEGIREYDKRIAGFAHEAGKGMIIVVNKWDTLDKDNHTVAKWEADIRDQFQFLTYAPIIFVSALTKQRLNKLPDLIKRISESQNKRIPSAVLNDVIMDAIAINPTPTDKGKRLKIFYATQVSVKPPTFVVFVNEEELMHFSYLRFLENQIRAAFTFEGTPIHLIARKRK</sequence>